<evidence type="ECO:0000255" key="1">
    <source>
        <dbReference type="HAMAP-Rule" id="MF_00373"/>
    </source>
</evidence>
<evidence type="ECO:0000305" key="2"/>
<proteinExistence type="inferred from homology"/>
<feature type="chain" id="PRO_0000178591" description="Large ribosomal subunit protein bL28">
    <location>
        <begin position="1"/>
        <end position="62"/>
    </location>
</feature>
<gene>
    <name evidence="1" type="primary">rpmB</name>
    <name type="ordered locus">WS0328</name>
</gene>
<protein>
    <recommendedName>
        <fullName evidence="1">Large ribosomal subunit protein bL28</fullName>
    </recommendedName>
    <alternativeName>
        <fullName evidence="2">50S ribosomal protein L28</fullName>
    </alternativeName>
</protein>
<comment type="similarity">
    <text evidence="1">Belongs to the bacterial ribosomal protein bL28 family.</text>
</comment>
<keyword id="KW-1185">Reference proteome</keyword>
<keyword id="KW-0687">Ribonucleoprotein</keyword>
<keyword id="KW-0689">Ribosomal protein</keyword>
<name>RL28_WOLSU</name>
<organism>
    <name type="scientific">Wolinella succinogenes (strain ATCC 29543 / DSM 1740 / CCUG 13145 / JCM 31913 / LMG 7466 / NCTC 11488 / FDC 602W)</name>
    <name type="common">Vibrio succinogenes</name>
    <dbReference type="NCBI Taxonomy" id="273121"/>
    <lineage>
        <taxon>Bacteria</taxon>
        <taxon>Pseudomonadati</taxon>
        <taxon>Campylobacterota</taxon>
        <taxon>Epsilonproteobacteria</taxon>
        <taxon>Campylobacterales</taxon>
        <taxon>Helicobacteraceae</taxon>
        <taxon>Wolinella</taxon>
    </lineage>
</organism>
<dbReference type="EMBL" id="BX571657">
    <property type="protein sequence ID" value="CAE09478.1"/>
    <property type="molecule type" value="Genomic_DNA"/>
</dbReference>
<dbReference type="RefSeq" id="WP_011138278.1">
    <property type="nucleotide sequence ID" value="NC_005090.1"/>
</dbReference>
<dbReference type="SMR" id="Q7MAD1"/>
<dbReference type="STRING" id="273121.WS0328"/>
<dbReference type="KEGG" id="wsu:WS0328"/>
<dbReference type="eggNOG" id="COG0227">
    <property type="taxonomic scope" value="Bacteria"/>
</dbReference>
<dbReference type="HOGENOM" id="CLU_064548_7_2_7"/>
<dbReference type="Proteomes" id="UP000000422">
    <property type="component" value="Chromosome"/>
</dbReference>
<dbReference type="GO" id="GO:1990904">
    <property type="term" value="C:ribonucleoprotein complex"/>
    <property type="evidence" value="ECO:0007669"/>
    <property type="project" value="UniProtKB-KW"/>
</dbReference>
<dbReference type="GO" id="GO:0005840">
    <property type="term" value="C:ribosome"/>
    <property type="evidence" value="ECO:0007669"/>
    <property type="project" value="UniProtKB-KW"/>
</dbReference>
<dbReference type="GO" id="GO:0003735">
    <property type="term" value="F:structural constituent of ribosome"/>
    <property type="evidence" value="ECO:0007669"/>
    <property type="project" value="InterPro"/>
</dbReference>
<dbReference type="GO" id="GO:0006412">
    <property type="term" value="P:translation"/>
    <property type="evidence" value="ECO:0007669"/>
    <property type="project" value="UniProtKB-UniRule"/>
</dbReference>
<dbReference type="Gene3D" id="2.30.170.40">
    <property type="entry name" value="Ribosomal protein L28/L24"/>
    <property type="match status" value="1"/>
</dbReference>
<dbReference type="HAMAP" id="MF_00373">
    <property type="entry name" value="Ribosomal_bL28"/>
    <property type="match status" value="1"/>
</dbReference>
<dbReference type="InterPro" id="IPR050096">
    <property type="entry name" value="Bacterial_rp_bL28"/>
</dbReference>
<dbReference type="InterPro" id="IPR026569">
    <property type="entry name" value="Ribosomal_bL28"/>
</dbReference>
<dbReference type="InterPro" id="IPR034704">
    <property type="entry name" value="Ribosomal_bL28/bL31-like_sf"/>
</dbReference>
<dbReference type="InterPro" id="IPR001383">
    <property type="entry name" value="Ribosomal_bL28_bact-type"/>
</dbReference>
<dbReference type="InterPro" id="IPR037147">
    <property type="entry name" value="Ribosomal_bL28_sf"/>
</dbReference>
<dbReference type="NCBIfam" id="TIGR00009">
    <property type="entry name" value="L28"/>
    <property type="match status" value="1"/>
</dbReference>
<dbReference type="PANTHER" id="PTHR39080">
    <property type="entry name" value="50S RIBOSOMAL PROTEIN L28"/>
    <property type="match status" value="1"/>
</dbReference>
<dbReference type="PANTHER" id="PTHR39080:SF1">
    <property type="entry name" value="LARGE RIBOSOMAL SUBUNIT PROTEIN BL28A"/>
    <property type="match status" value="1"/>
</dbReference>
<dbReference type="Pfam" id="PF00830">
    <property type="entry name" value="Ribosomal_L28"/>
    <property type="match status" value="1"/>
</dbReference>
<dbReference type="SUPFAM" id="SSF143800">
    <property type="entry name" value="L28p-like"/>
    <property type="match status" value="1"/>
</dbReference>
<accession>Q7MAD1</accession>
<sequence length="62" mass="6931">MARKCFFTGKGPMVGNNVSHANNKTKKRSLPNLRTVRVKLEDGTTVKLRVAASTLRTMKKRS</sequence>
<reference key="1">
    <citation type="journal article" date="2003" name="Proc. Natl. Acad. Sci. U.S.A.">
        <title>Complete genome sequence and analysis of Wolinella succinogenes.</title>
        <authorList>
            <person name="Baar C."/>
            <person name="Eppinger M."/>
            <person name="Raddatz G."/>
            <person name="Simon J."/>
            <person name="Lanz C."/>
            <person name="Klimmek O."/>
            <person name="Nandakumar R."/>
            <person name="Gross R."/>
            <person name="Rosinus A."/>
            <person name="Keller H."/>
            <person name="Jagtap P."/>
            <person name="Linke B."/>
            <person name="Meyer F."/>
            <person name="Lederer H."/>
            <person name="Schuster S.C."/>
        </authorList>
    </citation>
    <scope>NUCLEOTIDE SEQUENCE [LARGE SCALE GENOMIC DNA]</scope>
    <source>
        <strain>ATCC 29543 / DSM 1740 / CCUG 13145 / JCM 31913 / LMG 7466 / NCTC 11488 / FDC 602W</strain>
    </source>
</reference>